<organism>
    <name type="scientific">Escherichia coli O6:H1 (strain CFT073 / ATCC 700928 / UPEC)</name>
    <dbReference type="NCBI Taxonomy" id="199310"/>
    <lineage>
        <taxon>Bacteria</taxon>
        <taxon>Pseudomonadati</taxon>
        <taxon>Pseudomonadota</taxon>
        <taxon>Gammaproteobacteria</taxon>
        <taxon>Enterobacterales</taxon>
        <taxon>Enterobacteriaceae</taxon>
        <taxon>Escherichia</taxon>
    </lineage>
</organism>
<sequence>MARIIVVTSGKGGVGKTTSSAAIATGLAQKGKKTVVIDFDIGLRNLDLIMGCERRVVYDFVNVIQGDATLNQALIKDKRTENLYILPASQTRDKDALTREGVAKVLDDLKAMDFEFIVCDSPAGIETGALMALYFADEAIITTNPEVSSVRDSDRILGILASKSRRAENGEEPIKEHLLLTRYNPGRVSRGDMLSMEDVLEILRIKLVGVIPEDQSVLRASNQGEPVILDINADAGKAYADTVERLLGEERPFRFIEEEKKGFLKRLFGG</sequence>
<dbReference type="EMBL" id="AE014075">
    <property type="protein sequence ID" value="AAN80087.1"/>
    <property type="molecule type" value="Genomic_DNA"/>
</dbReference>
<dbReference type="RefSeq" id="WP_000101055.1">
    <property type="nucleotide sequence ID" value="NZ_CP051263.1"/>
</dbReference>
<dbReference type="SMR" id="P0AEZ4"/>
<dbReference type="STRING" id="199310.c1622"/>
<dbReference type="GeneID" id="93776259"/>
<dbReference type="KEGG" id="ecc:c1622"/>
<dbReference type="eggNOG" id="COG2894">
    <property type="taxonomic scope" value="Bacteria"/>
</dbReference>
<dbReference type="HOGENOM" id="CLU_037612_0_1_6"/>
<dbReference type="BioCyc" id="ECOL199310:C1622-MONOMER"/>
<dbReference type="Proteomes" id="UP000001410">
    <property type="component" value="Chromosome"/>
</dbReference>
<dbReference type="GO" id="GO:0009898">
    <property type="term" value="C:cytoplasmic side of plasma membrane"/>
    <property type="evidence" value="ECO:0007669"/>
    <property type="project" value="TreeGrafter"/>
</dbReference>
<dbReference type="GO" id="GO:0005829">
    <property type="term" value="C:cytosol"/>
    <property type="evidence" value="ECO:0007669"/>
    <property type="project" value="TreeGrafter"/>
</dbReference>
<dbReference type="GO" id="GO:0005524">
    <property type="term" value="F:ATP binding"/>
    <property type="evidence" value="ECO:0007669"/>
    <property type="project" value="UniProtKB-KW"/>
</dbReference>
<dbReference type="GO" id="GO:0016887">
    <property type="term" value="F:ATP hydrolysis activity"/>
    <property type="evidence" value="ECO:0007669"/>
    <property type="project" value="InterPro"/>
</dbReference>
<dbReference type="GO" id="GO:0000917">
    <property type="term" value="P:division septum assembly"/>
    <property type="evidence" value="ECO:0007669"/>
    <property type="project" value="UniProtKB-KW"/>
</dbReference>
<dbReference type="GO" id="GO:0051782">
    <property type="term" value="P:negative regulation of cell division"/>
    <property type="evidence" value="ECO:0007669"/>
    <property type="project" value="TreeGrafter"/>
</dbReference>
<dbReference type="CDD" id="cd02036">
    <property type="entry name" value="MinD"/>
    <property type="match status" value="1"/>
</dbReference>
<dbReference type="FunFam" id="3.40.50.300:FF:000068">
    <property type="entry name" value="Site-determining protein"/>
    <property type="match status" value="1"/>
</dbReference>
<dbReference type="Gene3D" id="3.40.50.300">
    <property type="entry name" value="P-loop containing nucleotide triphosphate hydrolases"/>
    <property type="match status" value="1"/>
</dbReference>
<dbReference type="InterPro" id="IPR002586">
    <property type="entry name" value="CobQ/CobB/MinD/ParA_Nub-bd_dom"/>
</dbReference>
<dbReference type="InterPro" id="IPR010223">
    <property type="entry name" value="MinD"/>
</dbReference>
<dbReference type="InterPro" id="IPR025501">
    <property type="entry name" value="MinD_FleN"/>
</dbReference>
<dbReference type="InterPro" id="IPR027417">
    <property type="entry name" value="P-loop_NTPase"/>
</dbReference>
<dbReference type="InterPro" id="IPR050625">
    <property type="entry name" value="ParA/MinD_ATPase"/>
</dbReference>
<dbReference type="NCBIfam" id="TIGR01968">
    <property type="entry name" value="minD_bact"/>
    <property type="match status" value="1"/>
</dbReference>
<dbReference type="NCBIfam" id="NF008079">
    <property type="entry name" value="PRK10818.1"/>
    <property type="match status" value="1"/>
</dbReference>
<dbReference type="PANTHER" id="PTHR43384:SF6">
    <property type="entry name" value="SEPTUM SITE-DETERMINING PROTEIN MIND HOMOLOG, CHLOROPLASTIC"/>
    <property type="match status" value="1"/>
</dbReference>
<dbReference type="PANTHER" id="PTHR43384">
    <property type="entry name" value="SEPTUM SITE-DETERMINING PROTEIN MIND HOMOLOG, CHLOROPLASTIC-RELATED"/>
    <property type="match status" value="1"/>
</dbReference>
<dbReference type="Pfam" id="PF01656">
    <property type="entry name" value="CbiA"/>
    <property type="match status" value="1"/>
</dbReference>
<dbReference type="PIRSF" id="PIRSF003092">
    <property type="entry name" value="MinD"/>
    <property type="match status" value="1"/>
</dbReference>
<dbReference type="SUPFAM" id="SSF52540">
    <property type="entry name" value="P-loop containing nucleoside triphosphate hydrolases"/>
    <property type="match status" value="1"/>
</dbReference>
<keyword id="KW-0067">ATP-binding</keyword>
<keyword id="KW-0131">Cell cycle</keyword>
<keyword id="KW-0132">Cell division</keyword>
<keyword id="KW-0997">Cell inner membrane</keyword>
<keyword id="KW-1003">Cell membrane</keyword>
<keyword id="KW-0472">Membrane</keyword>
<keyword id="KW-0547">Nucleotide-binding</keyword>
<keyword id="KW-1185">Reference proteome</keyword>
<keyword id="KW-0717">Septation</keyword>
<gene>
    <name type="primary">minD</name>
    <name type="ordered locus">c1622</name>
</gene>
<name>MIND_ECOL6</name>
<feature type="initiator methionine" description="Removed" evidence="1">
    <location>
        <position position="1"/>
    </location>
</feature>
<feature type="chain" id="PRO_0000201970" description="Septum site-determining protein MinD">
    <location>
        <begin position="2"/>
        <end position="270"/>
    </location>
</feature>
<feature type="binding site" evidence="2">
    <location>
        <begin position="11"/>
        <end position="18"/>
    </location>
    <ligand>
        <name>ATP</name>
        <dbReference type="ChEBI" id="CHEBI:30616"/>
    </ligand>
</feature>
<evidence type="ECO:0000250" key="1"/>
<evidence type="ECO:0000250" key="2">
    <source>
        <dbReference type="UniProtKB" id="Q72H90"/>
    </source>
</evidence>
<evidence type="ECO:0000305" key="3"/>
<protein>
    <recommendedName>
        <fullName>Septum site-determining protein MinD</fullName>
    </recommendedName>
    <alternativeName>
        <fullName>Cell division inhibitor MinD</fullName>
    </alternativeName>
</protein>
<reference key="1">
    <citation type="journal article" date="2002" name="Proc. Natl. Acad. Sci. U.S.A.">
        <title>Extensive mosaic structure revealed by the complete genome sequence of uropathogenic Escherichia coli.</title>
        <authorList>
            <person name="Welch R.A."/>
            <person name="Burland V."/>
            <person name="Plunkett G. III"/>
            <person name="Redford P."/>
            <person name="Roesch P."/>
            <person name="Rasko D."/>
            <person name="Buckles E.L."/>
            <person name="Liou S.-R."/>
            <person name="Boutin A."/>
            <person name="Hackett J."/>
            <person name="Stroud D."/>
            <person name="Mayhew G.F."/>
            <person name="Rose D.J."/>
            <person name="Zhou S."/>
            <person name="Schwartz D.C."/>
            <person name="Perna N.T."/>
            <person name="Mobley H.L.T."/>
            <person name="Donnenberg M.S."/>
            <person name="Blattner F.R."/>
        </authorList>
    </citation>
    <scope>NUCLEOTIDE SEQUENCE [LARGE SCALE GENOMIC DNA]</scope>
    <source>
        <strain>CFT073 / ATCC 700928 / UPEC</strain>
    </source>
</reference>
<comment type="function">
    <text evidence="1">ATPase required for the correct placement of the division site. Cell division inhibitors MinC and MinD act in concert to form an inhibitor capable of blocking formation of the polar Z ring septums. Rapidly oscillates between the poles of the cell to destabilize FtsZ filaments that have formed before they mature into polar Z rings (By similarity).</text>
</comment>
<comment type="subunit">
    <text evidence="1">Interacts with MinC and FtsZ.</text>
</comment>
<comment type="subcellular location">
    <subcellularLocation>
        <location evidence="1">Cell inner membrane</location>
        <topology evidence="1">Peripheral membrane protein</topology>
    </subcellularLocation>
</comment>
<comment type="similarity">
    <text evidence="3">Belongs to the ParA family. MinD subfamily.</text>
</comment>
<accession>P0AEZ4</accession>
<accession>P18197</accession>
<proteinExistence type="inferred from homology"/>